<protein>
    <recommendedName>
        <fullName evidence="2">Small ribosomal subunit protein uS9c</fullName>
    </recommendedName>
    <alternativeName>
        <fullName>30S ribosomal protein S9, chloroplastic</fullName>
    </alternativeName>
</protein>
<feature type="chain" id="PRO_0000111452" description="Small ribosomal subunit protein uS9c">
    <location>
        <begin position="1"/>
        <end position="128"/>
    </location>
</feature>
<feature type="region of interest" description="Disordered" evidence="1">
    <location>
        <begin position="106"/>
        <end position="128"/>
    </location>
</feature>
<feature type="compositionally biased region" description="Basic residues" evidence="1">
    <location>
        <begin position="109"/>
        <end position="128"/>
    </location>
</feature>
<name>RR9_CYACA</name>
<proteinExistence type="inferred from homology"/>
<organism>
    <name type="scientific">Cyanidium caldarium</name>
    <name type="common">Red alga</name>
    <dbReference type="NCBI Taxonomy" id="2771"/>
    <lineage>
        <taxon>Eukaryota</taxon>
        <taxon>Rhodophyta</taxon>
        <taxon>Bangiophyceae</taxon>
        <taxon>Cyanidiales</taxon>
        <taxon>Cyanidiaceae</taxon>
        <taxon>Cyanidium</taxon>
    </lineage>
</organism>
<evidence type="ECO:0000256" key="1">
    <source>
        <dbReference type="SAM" id="MobiDB-lite"/>
    </source>
</evidence>
<evidence type="ECO:0000305" key="2"/>
<gene>
    <name type="primary">rps9</name>
</gene>
<accession>Q9TLV4</accession>
<keyword id="KW-0150">Chloroplast</keyword>
<keyword id="KW-0934">Plastid</keyword>
<keyword id="KW-0687">Ribonucleoprotein</keyword>
<keyword id="KW-0689">Ribosomal protein</keyword>
<dbReference type="EMBL" id="AF022186">
    <property type="protein sequence ID" value="AAF12930.1"/>
    <property type="molecule type" value="Genomic_DNA"/>
</dbReference>
<dbReference type="RefSeq" id="NP_045164.1">
    <property type="nucleotide sequence ID" value="NC_001840.1"/>
</dbReference>
<dbReference type="SMR" id="Q9TLV4"/>
<dbReference type="GeneID" id="800159"/>
<dbReference type="GO" id="GO:0009507">
    <property type="term" value="C:chloroplast"/>
    <property type="evidence" value="ECO:0007669"/>
    <property type="project" value="UniProtKB-SubCell"/>
</dbReference>
<dbReference type="GO" id="GO:0015935">
    <property type="term" value="C:small ribosomal subunit"/>
    <property type="evidence" value="ECO:0007669"/>
    <property type="project" value="TreeGrafter"/>
</dbReference>
<dbReference type="GO" id="GO:0003723">
    <property type="term" value="F:RNA binding"/>
    <property type="evidence" value="ECO:0007669"/>
    <property type="project" value="TreeGrafter"/>
</dbReference>
<dbReference type="GO" id="GO:0003735">
    <property type="term" value="F:structural constituent of ribosome"/>
    <property type="evidence" value="ECO:0007669"/>
    <property type="project" value="InterPro"/>
</dbReference>
<dbReference type="GO" id="GO:0006412">
    <property type="term" value="P:translation"/>
    <property type="evidence" value="ECO:0007669"/>
    <property type="project" value="UniProtKB-UniRule"/>
</dbReference>
<dbReference type="FunFam" id="3.30.230.10:FF:000001">
    <property type="entry name" value="30S ribosomal protein S9"/>
    <property type="match status" value="1"/>
</dbReference>
<dbReference type="Gene3D" id="3.30.230.10">
    <property type="match status" value="1"/>
</dbReference>
<dbReference type="HAMAP" id="MF_00532_B">
    <property type="entry name" value="Ribosomal_uS9_B"/>
    <property type="match status" value="1"/>
</dbReference>
<dbReference type="InterPro" id="IPR020568">
    <property type="entry name" value="Ribosomal_Su5_D2-typ_SF"/>
</dbReference>
<dbReference type="InterPro" id="IPR000754">
    <property type="entry name" value="Ribosomal_uS9"/>
</dbReference>
<dbReference type="InterPro" id="IPR023035">
    <property type="entry name" value="Ribosomal_uS9_bac/plastid"/>
</dbReference>
<dbReference type="InterPro" id="IPR020574">
    <property type="entry name" value="Ribosomal_uS9_CS"/>
</dbReference>
<dbReference type="InterPro" id="IPR014721">
    <property type="entry name" value="Ribsml_uS5_D2-typ_fold_subgr"/>
</dbReference>
<dbReference type="NCBIfam" id="NF001099">
    <property type="entry name" value="PRK00132.1"/>
    <property type="match status" value="1"/>
</dbReference>
<dbReference type="PANTHER" id="PTHR21569">
    <property type="entry name" value="RIBOSOMAL PROTEIN S9"/>
    <property type="match status" value="1"/>
</dbReference>
<dbReference type="PANTHER" id="PTHR21569:SF1">
    <property type="entry name" value="SMALL RIBOSOMAL SUBUNIT PROTEIN US9M"/>
    <property type="match status" value="1"/>
</dbReference>
<dbReference type="Pfam" id="PF00380">
    <property type="entry name" value="Ribosomal_S9"/>
    <property type="match status" value="1"/>
</dbReference>
<dbReference type="SUPFAM" id="SSF54211">
    <property type="entry name" value="Ribosomal protein S5 domain 2-like"/>
    <property type="match status" value="1"/>
</dbReference>
<dbReference type="PROSITE" id="PS00360">
    <property type="entry name" value="RIBOSOMAL_S9"/>
    <property type="match status" value="1"/>
</dbReference>
<sequence length="128" mass="14329">MLSYSTGRRKCAVAQLRFFSGNGKIVVNGCSLDYYFQHNSAFTKIIRSPLKLLNLELLYDFIIVVKGGGLSGQAGAIRLAIARVLAGLSPSNRSSLKSKRYLTRDSRIKERKKYGLKKARKAPQFSKR</sequence>
<geneLocation type="chloroplast"/>
<comment type="subcellular location">
    <subcellularLocation>
        <location>Plastid</location>
        <location>Chloroplast</location>
    </subcellularLocation>
</comment>
<comment type="similarity">
    <text evidence="2">Belongs to the universal ribosomal protein uS9 family.</text>
</comment>
<reference key="1">
    <citation type="journal article" date="2000" name="J. Mol. Evol.">
        <title>The structure and gene repertoire of an ancient red algal plastid genome.</title>
        <authorList>
            <person name="Gloeckner G."/>
            <person name="Rosenthal A."/>
            <person name="Valentin K.-U."/>
        </authorList>
    </citation>
    <scope>NUCLEOTIDE SEQUENCE [LARGE SCALE GENOMIC DNA]</scope>
    <source>
        <strain>RK-1</strain>
    </source>
</reference>